<protein>
    <recommendedName>
        <fullName evidence="1">DNA/RNA-binding protein Alba</fullName>
    </recommendedName>
</protein>
<organism>
    <name type="scientific">Nitrosopumilus maritimus (strain SCM1)</name>
    <dbReference type="NCBI Taxonomy" id="436308"/>
    <lineage>
        <taxon>Archaea</taxon>
        <taxon>Nitrososphaerota</taxon>
        <taxon>Nitrososphaeria</taxon>
        <taxon>Nitrosopumilales</taxon>
        <taxon>Nitrosopumilaceae</taxon>
        <taxon>Nitrosopumilus</taxon>
    </lineage>
</organism>
<keyword id="KW-0007">Acetylation</keyword>
<keyword id="KW-0158">Chromosome</keyword>
<keyword id="KW-0963">Cytoplasm</keyword>
<keyword id="KW-0226">DNA condensation</keyword>
<keyword id="KW-0238">DNA-binding</keyword>
<keyword id="KW-1185">Reference proteome</keyword>
<reference key="1">
    <citation type="journal article" date="2010" name="Proc. Natl. Acad. Sci. U.S.A.">
        <title>Nitrosopumilus maritimus genome reveals unique mechanisms for nitrification and autotrophy in globally distributed marine crenarchaea.</title>
        <authorList>
            <person name="Walker C.B."/>
            <person name="de la Torre J.R."/>
            <person name="Klotz M.G."/>
            <person name="Urakawa H."/>
            <person name="Pinel N."/>
            <person name="Arp D.J."/>
            <person name="Brochier-Armanet C."/>
            <person name="Chain P.S."/>
            <person name="Chan P.P."/>
            <person name="Gollabgir A."/>
            <person name="Hemp J."/>
            <person name="Hugler M."/>
            <person name="Karr E.A."/>
            <person name="Konneke M."/>
            <person name="Shin M."/>
            <person name="Lawton T.J."/>
            <person name="Lowe T."/>
            <person name="Martens-Habbena W."/>
            <person name="Sayavedra-Soto L.A."/>
            <person name="Lang D."/>
            <person name="Sievert S.M."/>
            <person name="Rosenzweig A.C."/>
            <person name="Manning G."/>
            <person name="Stahl D.A."/>
        </authorList>
    </citation>
    <scope>NUCLEOTIDE SEQUENCE [LARGE SCALE GENOMIC DNA]</scope>
    <source>
        <strain>SCM1</strain>
    </source>
</reference>
<accession>A9A323</accession>
<comment type="function">
    <text evidence="1">Binds double-stranded DNA tightly but without sequence specificity. Involved in DNA compaction.</text>
</comment>
<comment type="subcellular location">
    <subcellularLocation>
        <location evidence="1">Cytoplasm</location>
    </subcellularLocation>
    <subcellularLocation>
        <location evidence="1">Chromosome</location>
    </subcellularLocation>
</comment>
<comment type="PTM">
    <text evidence="1">Acetylated. Acetylation at Lys-13 decreases DNA-binding affinity.</text>
</comment>
<comment type="similarity">
    <text evidence="1">Belongs to the histone-like Alba family.</text>
</comment>
<feature type="chain" id="PRO_1000137256" description="DNA/RNA-binding protein Alba">
    <location>
        <begin position="1"/>
        <end position="95"/>
    </location>
</feature>
<feature type="modified residue" description="N6-acetyllysine" evidence="1">
    <location>
        <position position="13"/>
    </location>
</feature>
<evidence type="ECO:0000255" key="1">
    <source>
        <dbReference type="HAMAP-Rule" id="MF_01122"/>
    </source>
</evidence>
<sequence>MSTEARDTIFIGKKPLMAYVTSTLIQLANIPSVNIKARGLSIGRAVDVAQIIARKTENAGYSIGEIKIGSESLESQDGRTRNVSTIEIEVKRNQA</sequence>
<gene>
    <name evidence="1" type="primary">albA</name>
    <name type="ordered locus">Nmar_0255</name>
</gene>
<dbReference type="EMBL" id="CP000866">
    <property type="protein sequence ID" value="ABX12151.1"/>
    <property type="molecule type" value="Genomic_DNA"/>
</dbReference>
<dbReference type="RefSeq" id="WP_012214638.1">
    <property type="nucleotide sequence ID" value="NC_010085.1"/>
</dbReference>
<dbReference type="SMR" id="A9A323"/>
<dbReference type="STRING" id="436308.Nmar_0255"/>
<dbReference type="EnsemblBacteria" id="ABX12151">
    <property type="protein sequence ID" value="ABX12151"/>
    <property type="gene ID" value="Nmar_0255"/>
</dbReference>
<dbReference type="GeneID" id="5774053"/>
<dbReference type="KEGG" id="nmr:Nmar_0255"/>
<dbReference type="eggNOG" id="arCOG01753">
    <property type="taxonomic scope" value="Archaea"/>
</dbReference>
<dbReference type="HOGENOM" id="CLU_110989_1_1_2"/>
<dbReference type="InParanoid" id="A9A323"/>
<dbReference type="OrthoDB" id="10360at2157"/>
<dbReference type="PhylomeDB" id="A9A323"/>
<dbReference type="Proteomes" id="UP000000792">
    <property type="component" value="Chromosome"/>
</dbReference>
<dbReference type="GO" id="GO:0005694">
    <property type="term" value="C:chromosome"/>
    <property type="evidence" value="ECO:0007669"/>
    <property type="project" value="UniProtKB-SubCell"/>
</dbReference>
<dbReference type="GO" id="GO:0005737">
    <property type="term" value="C:cytoplasm"/>
    <property type="evidence" value="ECO:0007669"/>
    <property type="project" value="UniProtKB-SubCell"/>
</dbReference>
<dbReference type="GO" id="GO:0003690">
    <property type="term" value="F:double-stranded DNA binding"/>
    <property type="evidence" value="ECO:0007669"/>
    <property type="project" value="UniProtKB-UniRule"/>
</dbReference>
<dbReference type="GO" id="GO:0003723">
    <property type="term" value="F:RNA binding"/>
    <property type="evidence" value="ECO:0007669"/>
    <property type="project" value="InterPro"/>
</dbReference>
<dbReference type="GO" id="GO:0030261">
    <property type="term" value="P:chromosome condensation"/>
    <property type="evidence" value="ECO:0007669"/>
    <property type="project" value="UniProtKB-KW"/>
</dbReference>
<dbReference type="Gene3D" id="3.30.110.20">
    <property type="entry name" value="Alba-like domain"/>
    <property type="match status" value="1"/>
</dbReference>
<dbReference type="HAMAP" id="MF_01122">
    <property type="entry name" value="AlbA"/>
    <property type="match status" value="1"/>
</dbReference>
<dbReference type="InterPro" id="IPR036882">
    <property type="entry name" value="Alba-like_dom_sf"/>
</dbReference>
<dbReference type="InterPro" id="IPR013795">
    <property type="entry name" value="DNA/RNA-bd_Alba"/>
</dbReference>
<dbReference type="InterPro" id="IPR002775">
    <property type="entry name" value="DNA/RNA-bd_Alba-like"/>
</dbReference>
<dbReference type="Pfam" id="PF01918">
    <property type="entry name" value="Alba"/>
    <property type="match status" value="1"/>
</dbReference>
<dbReference type="PIRSF" id="PIRSF028732">
    <property type="entry name" value="Alba"/>
    <property type="match status" value="1"/>
</dbReference>
<dbReference type="SUPFAM" id="SSF82704">
    <property type="entry name" value="AlbA-like"/>
    <property type="match status" value="1"/>
</dbReference>
<name>ALBA_NITMS</name>
<proteinExistence type="inferred from homology"/>